<organism>
    <name type="scientific">Gallus gallus</name>
    <name type="common">Chicken</name>
    <dbReference type="NCBI Taxonomy" id="9031"/>
    <lineage>
        <taxon>Eukaryota</taxon>
        <taxon>Metazoa</taxon>
        <taxon>Chordata</taxon>
        <taxon>Craniata</taxon>
        <taxon>Vertebrata</taxon>
        <taxon>Euteleostomi</taxon>
        <taxon>Archelosauria</taxon>
        <taxon>Archosauria</taxon>
        <taxon>Dinosauria</taxon>
        <taxon>Saurischia</taxon>
        <taxon>Theropoda</taxon>
        <taxon>Coelurosauria</taxon>
        <taxon>Aves</taxon>
        <taxon>Neognathae</taxon>
        <taxon>Galloanserae</taxon>
        <taxon>Galliformes</taxon>
        <taxon>Phasianidae</taxon>
        <taxon>Phasianinae</taxon>
        <taxon>Gallus</taxon>
    </lineage>
</organism>
<name>ENTP5_CHICK</name>
<dbReference type="EC" id="3.6.1.6" evidence="3"/>
<dbReference type="EMBL" id="AADN02003433">
    <property type="status" value="NOT_ANNOTATED_CDS"/>
    <property type="molecule type" value="Genomic_DNA"/>
</dbReference>
<dbReference type="SMR" id="E1C1L6"/>
<dbReference type="FunCoup" id="E1C1L6">
    <property type="interactions" value="984"/>
</dbReference>
<dbReference type="STRING" id="9031.ENSGALP00000016566"/>
<dbReference type="GlyCosmos" id="E1C1L6">
    <property type="glycosylation" value="1 site, No reported glycans"/>
</dbReference>
<dbReference type="GlyGen" id="E1C1L6">
    <property type="glycosylation" value="1 site"/>
</dbReference>
<dbReference type="PaxDb" id="9031-ENSGALP00000016566"/>
<dbReference type="VEuPathDB" id="HostDB:geneid_423343"/>
<dbReference type="eggNOG" id="KOG1385">
    <property type="taxonomic scope" value="Eukaryota"/>
</dbReference>
<dbReference type="HOGENOM" id="CLU_010246_0_2_1"/>
<dbReference type="InParanoid" id="E1C1L6"/>
<dbReference type="OrthoDB" id="6372431at2759"/>
<dbReference type="PhylomeDB" id="E1C1L6"/>
<dbReference type="TreeFam" id="TF315029"/>
<dbReference type="UniPathway" id="UPA00378"/>
<dbReference type="PRO" id="PR:E1C1L6"/>
<dbReference type="Proteomes" id="UP000000539">
    <property type="component" value="Unassembled WGS sequence"/>
</dbReference>
<dbReference type="GO" id="GO:0005783">
    <property type="term" value="C:endoplasmic reticulum"/>
    <property type="evidence" value="ECO:0000250"/>
    <property type="project" value="UniProtKB"/>
</dbReference>
<dbReference type="GO" id="GO:0005576">
    <property type="term" value="C:extracellular region"/>
    <property type="evidence" value="ECO:0007669"/>
    <property type="project" value="UniProtKB-SubCell"/>
</dbReference>
<dbReference type="GO" id="GO:0043262">
    <property type="term" value="F:ADP phosphatase activity"/>
    <property type="evidence" value="ECO:0007669"/>
    <property type="project" value="RHEA"/>
</dbReference>
<dbReference type="GO" id="GO:0036384">
    <property type="term" value="F:CDP phosphatase activity"/>
    <property type="evidence" value="ECO:0007669"/>
    <property type="project" value="RHEA"/>
</dbReference>
<dbReference type="GO" id="GO:0004382">
    <property type="term" value="F:GDP phosphatase activity"/>
    <property type="evidence" value="ECO:0000250"/>
    <property type="project" value="UniProtKB"/>
</dbReference>
<dbReference type="GO" id="GO:1990003">
    <property type="term" value="F:IDP phosphatase activity"/>
    <property type="evidence" value="ECO:0007669"/>
    <property type="project" value="RHEA"/>
</dbReference>
<dbReference type="GO" id="GO:0045134">
    <property type="term" value="F:UDP phosphatase activity"/>
    <property type="evidence" value="ECO:0000250"/>
    <property type="project" value="UniProtKB"/>
</dbReference>
<dbReference type="GO" id="GO:0051084">
    <property type="term" value="P:'de novo' post-translational protein folding"/>
    <property type="evidence" value="ECO:0000250"/>
    <property type="project" value="UniProtKB"/>
</dbReference>
<dbReference type="GO" id="GO:0006487">
    <property type="term" value="P:protein N-linked glycosylation"/>
    <property type="evidence" value="ECO:0000250"/>
    <property type="project" value="UniProtKB"/>
</dbReference>
<dbReference type="GO" id="GO:0006256">
    <property type="term" value="P:UDP catabolic process"/>
    <property type="evidence" value="ECO:0000250"/>
    <property type="project" value="UniProtKB"/>
</dbReference>
<dbReference type="GO" id="GO:0006011">
    <property type="term" value="P:UDP-alpha-D-glucose metabolic process"/>
    <property type="evidence" value="ECO:0000250"/>
    <property type="project" value="UniProtKB"/>
</dbReference>
<dbReference type="CDD" id="cd24114">
    <property type="entry name" value="ASKHA_NBD_NTPDase5"/>
    <property type="match status" value="1"/>
</dbReference>
<dbReference type="FunFam" id="3.30.420.150:FF:000004">
    <property type="entry name" value="Ectonucleoside triphosphate diphosphohydrolase 5"/>
    <property type="match status" value="1"/>
</dbReference>
<dbReference type="FunFam" id="3.30.420.40:FF:000052">
    <property type="entry name" value="Ectonucleoside triphosphate diphosphohydrolase 5"/>
    <property type="match status" value="1"/>
</dbReference>
<dbReference type="Gene3D" id="3.30.420.40">
    <property type="match status" value="1"/>
</dbReference>
<dbReference type="Gene3D" id="3.30.420.150">
    <property type="entry name" value="Exopolyphosphatase. Domain 2"/>
    <property type="match status" value="1"/>
</dbReference>
<dbReference type="InterPro" id="IPR000407">
    <property type="entry name" value="GDA1_CD39_NTPase"/>
</dbReference>
<dbReference type="PANTHER" id="PTHR11782">
    <property type="entry name" value="ADENOSINE/GUANOSINE DIPHOSPHATASE"/>
    <property type="match status" value="1"/>
</dbReference>
<dbReference type="PANTHER" id="PTHR11782:SF35">
    <property type="entry name" value="NUCLEOSIDE DIPHOSPHATE PHOSPHATASE ENTPD5"/>
    <property type="match status" value="1"/>
</dbReference>
<dbReference type="Pfam" id="PF01150">
    <property type="entry name" value="GDA1_CD39"/>
    <property type="match status" value="1"/>
</dbReference>
<dbReference type="PROSITE" id="PS01238">
    <property type="entry name" value="GDA1_CD39_NTPASE"/>
    <property type="match status" value="1"/>
</dbReference>
<proteinExistence type="inferred from homology"/>
<sequence length="428" mass="47961">MTSSRLPVLLALVFSSLSPVLSHSNREMWFQDLFPPNTCPINAKTKTFYGIMFDAGSTGTRIHIYTFVQKSPEILPELEGEIFESVKPGLSAYADQPEKGAESVKRLLDMAIDAVPPHLWKKTPVVLKATAGLRLLSEEKAQALLSEVKEVFEESPFLVPEDSVSIMDGSYEGILAWITVNFLTGQLSGQNQHTVGTLDLGGASTQITFLPRFEETLKESPTDFLTSFEMFNSTYKLYTHSYLGFGLKAARLATLGALNTEVADRQMFRSSCLPKQLEAEWHFGGVKYRYGGNKEGETGFKPCYLEVLKVVKGKLHQPDEIRGSSFYAFSYYYDRAADTNLIDYEQGGVLEVRDFERKAKEVCDNMERFSSASPFLCMDLTYITALLKEGFGFRDNTLLQLTKKVNNIETSWTLGATFHLLQSLGITY</sequence>
<accession>E1C1L6</accession>
<feature type="signal peptide" evidence="4">
    <location>
        <begin position="1"/>
        <end position="24"/>
    </location>
</feature>
<feature type="chain" id="PRO_0000404543" description="Ectonucleoside triphosphate diphosphohydrolase 5">
    <location>
        <begin position="25"/>
        <end position="428"/>
    </location>
</feature>
<feature type="active site" description="Proton acceptor" evidence="3">
    <location>
        <position position="172"/>
    </location>
</feature>
<feature type="glycosylation site" description="N-linked (GlcNAc...) asparagine" evidence="4">
    <location>
        <position position="232"/>
    </location>
</feature>
<feature type="disulfide bond" evidence="1">
    <location>
        <begin position="272"/>
        <end position="303"/>
    </location>
</feature>
<feature type="disulfide bond" evidence="1">
    <location>
        <begin position="363"/>
        <end position="377"/>
    </location>
</feature>
<evidence type="ECO:0000250" key="1"/>
<evidence type="ECO:0000250" key="2">
    <source>
        <dbReference type="UniProtKB" id="O75356"/>
    </source>
</evidence>
<evidence type="ECO:0000250" key="3">
    <source>
        <dbReference type="UniProtKB" id="Q9WUZ9"/>
    </source>
</evidence>
<evidence type="ECO:0000255" key="4"/>
<evidence type="ECO:0000305" key="5"/>
<protein>
    <recommendedName>
        <fullName evidence="3">Ectonucleoside triphosphate diphosphohydrolase 5</fullName>
        <shortName>NTPDase 5</shortName>
        <ecNumber evidence="3">3.6.1.6</ecNumber>
    </recommendedName>
    <alternativeName>
        <fullName>Guanosine-diphosphatase ENTPD5</fullName>
        <shortName>GDPase ENTPD5</shortName>
    </alternativeName>
    <alternativeName>
        <fullName>Uridine-diphosphatase ENTPD5</fullName>
        <shortName>UDPase ENTPD5</shortName>
    </alternativeName>
</protein>
<comment type="function">
    <text evidence="2 3">Hydrolyzes nucleoside diphosphates with a preference for GDP, IDP and UDP compared to ADP and CDP (By similarity). In the lumen of the endoplasmic reticulum, hydrolyzes UDP that acts as an end-product feedback inhibitor of the UDP-Glc:glycoprotein glucosyltransferases. UMP can be transported back by an UDP-sugar antiporter to the cytosol where it is consumed to regenerate UDP-glucose. Therefore, it positively regulates protein reglucosylation by clearing UDP from the ER lumen and by promoting the regeneration of UDP-glucose. Protein reglucosylation is essential to proper glycoprotein folding and quality control in the ER (By similarity).</text>
</comment>
<comment type="catalytic activity">
    <reaction evidence="2">
        <text>a ribonucleoside 5'-diphosphate + H2O = a ribonucleoside 5'-phosphate + phosphate + H(+)</text>
        <dbReference type="Rhea" id="RHEA:36799"/>
        <dbReference type="ChEBI" id="CHEBI:15377"/>
        <dbReference type="ChEBI" id="CHEBI:15378"/>
        <dbReference type="ChEBI" id="CHEBI:43474"/>
        <dbReference type="ChEBI" id="CHEBI:57930"/>
        <dbReference type="ChEBI" id="CHEBI:58043"/>
        <dbReference type="EC" id="3.6.1.6"/>
    </reaction>
    <physiologicalReaction direction="left-to-right" evidence="2">
        <dbReference type="Rhea" id="RHEA:36800"/>
    </physiologicalReaction>
</comment>
<comment type="catalytic activity">
    <reaction evidence="2">
        <text>GDP + H2O = GMP + phosphate + H(+)</text>
        <dbReference type="Rhea" id="RHEA:22156"/>
        <dbReference type="ChEBI" id="CHEBI:15377"/>
        <dbReference type="ChEBI" id="CHEBI:15378"/>
        <dbReference type="ChEBI" id="CHEBI:43474"/>
        <dbReference type="ChEBI" id="CHEBI:58115"/>
        <dbReference type="ChEBI" id="CHEBI:58189"/>
        <dbReference type="EC" id="3.6.1.6"/>
    </reaction>
    <physiologicalReaction direction="left-to-right" evidence="2">
        <dbReference type="Rhea" id="RHEA:22157"/>
    </physiologicalReaction>
</comment>
<comment type="catalytic activity">
    <reaction evidence="2">
        <text>UDP + H2O = UMP + phosphate + H(+)</text>
        <dbReference type="Rhea" id="RHEA:64876"/>
        <dbReference type="ChEBI" id="CHEBI:15377"/>
        <dbReference type="ChEBI" id="CHEBI:15378"/>
        <dbReference type="ChEBI" id="CHEBI:43474"/>
        <dbReference type="ChEBI" id="CHEBI:57865"/>
        <dbReference type="ChEBI" id="CHEBI:58223"/>
        <dbReference type="EC" id="3.6.1.6"/>
    </reaction>
    <physiologicalReaction direction="left-to-right" evidence="2">
        <dbReference type="Rhea" id="RHEA:64877"/>
    </physiologicalReaction>
</comment>
<comment type="catalytic activity">
    <reaction evidence="2">
        <text>IDP + H2O = IMP + phosphate + H(+)</text>
        <dbReference type="Rhea" id="RHEA:35207"/>
        <dbReference type="ChEBI" id="CHEBI:15377"/>
        <dbReference type="ChEBI" id="CHEBI:15378"/>
        <dbReference type="ChEBI" id="CHEBI:43474"/>
        <dbReference type="ChEBI" id="CHEBI:58053"/>
        <dbReference type="ChEBI" id="CHEBI:58280"/>
        <dbReference type="EC" id="3.6.1.6"/>
    </reaction>
    <physiologicalReaction direction="left-to-right" evidence="2">
        <dbReference type="Rhea" id="RHEA:35208"/>
    </physiologicalReaction>
</comment>
<comment type="catalytic activity">
    <reaction evidence="2">
        <text>CDP + H2O = CMP + phosphate + H(+)</text>
        <dbReference type="Rhea" id="RHEA:64880"/>
        <dbReference type="ChEBI" id="CHEBI:15377"/>
        <dbReference type="ChEBI" id="CHEBI:15378"/>
        <dbReference type="ChEBI" id="CHEBI:43474"/>
        <dbReference type="ChEBI" id="CHEBI:58069"/>
        <dbReference type="ChEBI" id="CHEBI:60377"/>
        <dbReference type="EC" id="3.6.1.6"/>
    </reaction>
    <physiologicalReaction direction="left-to-right" evidence="2">
        <dbReference type="Rhea" id="RHEA:64881"/>
    </physiologicalReaction>
</comment>
<comment type="catalytic activity">
    <reaction evidence="2">
        <text>ADP + H2O = AMP + phosphate + H(+)</text>
        <dbReference type="Rhea" id="RHEA:61436"/>
        <dbReference type="ChEBI" id="CHEBI:15377"/>
        <dbReference type="ChEBI" id="CHEBI:15378"/>
        <dbReference type="ChEBI" id="CHEBI:43474"/>
        <dbReference type="ChEBI" id="CHEBI:456215"/>
        <dbReference type="ChEBI" id="CHEBI:456216"/>
        <dbReference type="EC" id="3.6.1.6"/>
    </reaction>
    <physiologicalReaction direction="left-to-right" evidence="2">
        <dbReference type="Rhea" id="RHEA:61437"/>
    </physiologicalReaction>
</comment>
<comment type="cofactor">
    <cofactor evidence="2">
        <name>Ca(2+)</name>
        <dbReference type="ChEBI" id="CHEBI:29108"/>
    </cofactor>
    <cofactor evidence="2">
        <name>Mg(2+)</name>
        <dbReference type="ChEBI" id="CHEBI:18420"/>
    </cofactor>
</comment>
<comment type="pathway">
    <text evidence="3">Protein modification; protein glycosylation.</text>
</comment>
<comment type="subunit">
    <text evidence="2">Monomer; active form. Homodimer; disulfide-linked. Homodimers are enzymatically inactive.</text>
</comment>
<comment type="subcellular location">
    <subcellularLocation>
        <location evidence="3">Endoplasmic reticulum</location>
    </subcellularLocation>
    <subcellularLocation>
        <location evidence="2">Secreted</location>
    </subcellularLocation>
</comment>
<comment type="similarity">
    <text evidence="5">Belongs to the GDA1/CD39 NTPase family.</text>
</comment>
<gene>
    <name type="primary">ENTPD5</name>
</gene>
<reference key="1">
    <citation type="journal article" date="2004" name="Nature">
        <title>Sequence and comparative analysis of the chicken genome provide unique perspectives on vertebrate evolution.</title>
        <authorList>
            <person name="Hillier L.W."/>
            <person name="Miller W."/>
            <person name="Birney E."/>
            <person name="Warren W."/>
            <person name="Hardison R.C."/>
            <person name="Ponting C.P."/>
            <person name="Bork P."/>
            <person name="Burt D.W."/>
            <person name="Groenen M.A.M."/>
            <person name="Delany M.E."/>
            <person name="Dodgson J.B."/>
            <person name="Chinwalla A.T."/>
            <person name="Cliften P.F."/>
            <person name="Clifton S.W."/>
            <person name="Delehaunty K.D."/>
            <person name="Fronick C."/>
            <person name="Fulton R.S."/>
            <person name="Graves T.A."/>
            <person name="Kremitzki C."/>
            <person name="Layman D."/>
            <person name="Magrini V."/>
            <person name="McPherson J.D."/>
            <person name="Miner T.L."/>
            <person name="Minx P."/>
            <person name="Nash W.E."/>
            <person name="Nhan M.N."/>
            <person name="Nelson J.O."/>
            <person name="Oddy L.G."/>
            <person name="Pohl C.S."/>
            <person name="Randall-Maher J."/>
            <person name="Smith S.M."/>
            <person name="Wallis J.W."/>
            <person name="Yang S.-P."/>
            <person name="Romanov M.N."/>
            <person name="Rondelli C.M."/>
            <person name="Paton B."/>
            <person name="Smith J."/>
            <person name="Morrice D."/>
            <person name="Daniels L."/>
            <person name="Tempest H.G."/>
            <person name="Robertson L."/>
            <person name="Masabanda J.S."/>
            <person name="Griffin D.K."/>
            <person name="Vignal A."/>
            <person name="Fillon V."/>
            <person name="Jacobbson L."/>
            <person name="Kerje S."/>
            <person name="Andersson L."/>
            <person name="Crooijmans R.P."/>
            <person name="Aerts J."/>
            <person name="van der Poel J.J."/>
            <person name="Ellegren H."/>
            <person name="Caldwell R.B."/>
            <person name="Hubbard S.J."/>
            <person name="Grafham D.V."/>
            <person name="Kierzek A.M."/>
            <person name="McLaren S.R."/>
            <person name="Overton I.M."/>
            <person name="Arakawa H."/>
            <person name="Beattie K.J."/>
            <person name="Bezzubov Y."/>
            <person name="Boardman P.E."/>
            <person name="Bonfield J.K."/>
            <person name="Croning M.D.R."/>
            <person name="Davies R.M."/>
            <person name="Francis M.D."/>
            <person name="Humphray S.J."/>
            <person name="Scott C.E."/>
            <person name="Taylor R.G."/>
            <person name="Tickle C."/>
            <person name="Brown W.R.A."/>
            <person name="Rogers J."/>
            <person name="Buerstedde J.-M."/>
            <person name="Wilson S.A."/>
            <person name="Stubbs L."/>
            <person name="Ovcharenko I."/>
            <person name="Gordon L."/>
            <person name="Lucas S."/>
            <person name="Miller M.M."/>
            <person name="Inoko H."/>
            <person name="Shiina T."/>
            <person name="Kaufman J."/>
            <person name="Salomonsen J."/>
            <person name="Skjoedt K."/>
            <person name="Wong G.K.-S."/>
            <person name="Wang J."/>
            <person name="Liu B."/>
            <person name="Wang J."/>
            <person name="Yu J."/>
            <person name="Yang H."/>
            <person name="Nefedov M."/>
            <person name="Koriabine M."/>
            <person name="Dejong P.J."/>
            <person name="Goodstadt L."/>
            <person name="Webber C."/>
            <person name="Dickens N.J."/>
            <person name="Letunic I."/>
            <person name="Suyama M."/>
            <person name="Torrents D."/>
            <person name="von Mering C."/>
            <person name="Zdobnov E.M."/>
            <person name="Makova K."/>
            <person name="Nekrutenko A."/>
            <person name="Elnitski L."/>
            <person name="Eswara P."/>
            <person name="King D.C."/>
            <person name="Yang S.-P."/>
            <person name="Tyekucheva S."/>
            <person name="Radakrishnan A."/>
            <person name="Harris R.S."/>
            <person name="Chiaromonte F."/>
            <person name="Taylor J."/>
            <person name="He J."/>
            <person name="Rijnkels M."/>
            <person name="Griffiths-Jones S."/>
            <person name="Ureta-Vidal A."/>
            <person name="Hoffman M.M."/>
            <person name="Severin J."/>
            <person name="Searle S.M.J."/>
            <person name="Law A.S."/>
            <person name="Speed D."/>
            <person name="Waddington D."/>
            <person name="Cheng Z."/>
            <person name="Tuzun E."/>
            <person name="Eichler E."/>
            <person name="Bao Z."/>
            <person name="Flicek P."/>
            <person name="Shteynberg D.D."/>
            <person name="Brent M.R."/>
            <person name="Bye J.M."/>
            <person name="Huckle E.J."/>
            <person name="Chatterji S."/>
            <person name="Dewey C."/>
            <person name="Pachter L."/>
            <person name="Kouranov A."/>
            <person name="Mourelatos Z."/>
            <person name="Hatzigeorgiou A.G."/>
            <person name="Paterson A.H."/>
            <person name="Ivarie R."/>
            <person name="Brandstrom M."/>
            <person name="Axelsson E."/>
            <person name="Backstrom N."/>
            <person name="Berlin S."/>
            <person name="Webster M.T."/>
            <person name="Pourquie O."/>
            <person name="Reymond A."/>
            <person name="Ucla C."/>
            <person name="Antonarakis S.E."/>
            <person name="Long M."/>
            <person name="Emerson J.J."/>
            <person name="Betran E."/>
            <person name="Dupanloup I."/>
            <person name="Kaessmann H."/>
            <person name="Hinrichs A.S."/>
            <person name="Bejerano G."/>
            <person name="Furey T.S."/>
            <person name="Harte R.A."/>
            <person name="Raney B."/>
            <person name="Siepel A."/>
            <person name="Kent W.J."/>
            <person name="Haussler D."/>
            <person name="Eyras E."/>
            <person name="Castelo R."/>
            <person name="Abril J.F."/>
            <person name="Castellano S."/>
            <person name="Camara F."/>
            <person name="Parra G."/>
            <person name="Guigo R."/>
            <person name="Bourque G."/>
            <person name="Tesler G."/>
            <person name="Pevzner P.A."/>
            <person name="Smit A."/>
            <person name="Fulton L.A."/>
            <person name="Mardis E.R."/>
            <person name="Wilson R.K."/>
        </authorList>
    </citation>
    <scope>NUCLEOTIDE SEQUENCE [LARGE SCALE GENOMIC DNA]</scope>
</reference>
<keyword id="KW-0106">Calcium</keyword>
<keyword id="KW-1015">Disulfide bond</keyword>
<keyword id="KW-0256">Endoplasmic reticulum</keyword>
<keyword id="KW-0325">Glycoprotein</keyword>
<keyword id="KW-0378">Hydrolase</keyword>
<keyword id="KW-0460">Magnesium</keyword>
<keyword id="KW-1185">Reference proteome</keyword>
<keyword id="KW-0964">Secreted</keyword>
<keyword id="KW-0732">Signal</keyword>